<accession>A6U151</accession>
<dbReference type="EMBL" id="CP000736">
    <property type="protein sequence ID" value="ABR52169.1"/>
    <property type="molecule type" value="Genomic_DNA"/>
</dbReference>
<dbReference type="SMR" id="A6U151"/>
<dbReference type="KEGG" id="sah:SaurJH1_1316"/>
<dbReference type="HOGENOM" id="CLU_108696_5_1_9"/>
<dbReference type="UniPathway" id="UPA00094"/>
<dbReference type="GO" id="GO:0005829">
    <property type="term" value="C:cytosol"/>
    <property type="evidence" value="ECO:0007669"/>
    <property type="project" value="TreeGrafter"/>
</dbReference>
<dbReference type="GO" id="GO:0016020">
    <property type="term" value="C:membrane"/>
    <property type="evidence" value="ECO:0007669"/>
    <property type="project" value="GOC"/>
</dbReference>
<dbReference type="GO" id="GO:0000035">
    <property type="term" value="F:acyl binding"/>
    <property type="evidence" value="ECO:0007669"/>
    <property type="project" value="TreeGrafter"/>
</dbReference>
<dbReference type="GO" id="GO:0000036">
    <property type="term" value="F:acyl carrier activity"/>
    <property type="evidence" value="ECO:0007669"/>
    <property type="project" value="UniProtKB-UniRule"/>
</dbReference>
<dbReference type="GO" id="GO:0009245">
    <property type="term" value="P:lipid A biosynthetic process"/>
    <property type="evidence" value="ECO:0007669"/>
    <property type="project" value="TreeGrafter"/>
</dbReference>
<dbReference type="FunFam" id="1.10.1200.10:FF:000001">
    <property type="entry name" value="Acyl carrier protein"/>
    <property type="match status" value="1"/>
</dbReference>
<dbReference type="Gene3D" id="1.10.1200.10">
    <property type="entry name" value="ACP-like"/>
    <property type="match status" value="1"/>
</dbReference>
<dbReference type="HAMAP" id="MF_01217">
    <property type="entry name" value="Acyl_carrier"/>
    <property type="match status" value="1"/>
</dbReference>
<dbReference type="InterPro" id="IPR003231">
    <property type="entry name" value="ACP"/>
</dbReference>
<dbReference type="InterPro" id="IPR036736">
    <property type="entry name" value="ACP-like_sf"/>
</dbReference>
<dbReference type="InterPro" id="IPR009081">
    <property type="entry name" value="PP-bd_ACP"/>
</dbReference>
<dbReference type="InterPro" id="IPR006162">
    <property type="entry name" value="Ppantetheine_attach_site"/>
</dbReference>
<dbReference type="NCBIfam" id="TIGR00517">
    <property type="entry name" value="acyl_carrier"/>
    <property type="match status" value="1"/>
</dbReference>
<dbReference type="NCBIfam" id="NF002148">
    <property type="entry name" value="PRK00982.1-2"/>
    <property type="match status" value="1"/>
</dbReference>
<dbReference type="NCBIfam" id="NF002150">
    <property type="entry name" value="PRK00982.1-4"/>
    <property type="match status" value="1"/>
</dbReference>
<dbReference type="NCBIfam" id="NF002151">
    <property type="entry name" value="PRK00982.1-5"/>
    <property type="match status" value="1"/>
</dbReference>
<dbReference type="PANTHER" id="PTHR20863">
    <property type="entry name" value="ACYL CARRIER PROTEIN"/>
    <property type="match status" value="1"/>
</dbReference>
<dbReference type="PANTHER" id="PTHR20863:SF76">
    <property type="entry name" value="CARRIER DOMAIN-CONTAINING PROTEIN"/>
    <property type="match status" value="1"/>
</dbReference>
<dbReference type="Pfam" id="PF00550">
    <property type="entry name" value="PP-binding"/>
    <property type="match status" value="1"/>
</dbReference>
<dbReference type="SUPFAM" id="SSF47336">
    <property type="entry name" value="ACP-like"/>
    <property type="match status" value="1"/>
</dbReference>
<dbReference type="PROSITE" id="PS50075">
    <property type="entry name" value="CARRIER"/>
    <property type="match status" value="1"/>
</dbReference>
<dbReference type="PROSITE" id="PS00012">
    <property type="entry name" value="PHOSPHOPANTETHEINE"/>
    <property type="match status" value="1"/>
</dbReference>
<proteinExistence type="inferred from homology"/>
<feature type="chain" id="PRO_1000085613" description="Acyl carrier protein">
    <location>
        <begin position="1"/>
        <end position="77"/>
    </location>
</feature>
<feature type="domain" description="Carrier" evidence="2">
    <location>
        <begin position="1"/>
        <end position="76"/>
    </location>
</feature>
<feature type="modified residue" description="O-(pantetheine 4'-phosphoryl)serine" evidence="2">
    <location>
        <position position="36"/>
    </location>
</feature>
<evidence type="ECO:0000255" key="1">
    <source>
        <dbReference type="HAMAP-Rule" id="MF_01217"/>
    </source>
</evidence>
<evidence type="ECO:0000255" key="2">
    <source>
        <dbReference type="PROSITE-ProRule" id="PRU00258"/>
    </source>
</evidence>
<comment type="function">
    <text evidence="1">Carrier of the growing fatty acid chain in fatty acid biosynthesis.</text>
</comment>
<comment type="pathway">
    <text evidence="1">Lipid metabolism; fatty acid biosynthesis.</text>
</comment>
<comment type="subcellular location">
    <subcellularLocation>
        <location evidence="1">Cytoplasm</location>
    </subcellularLocation>
</comment>
<comment type="PTM">
    <text evidence="1">4'-phosphopantetheine is transferred from CoA to a specific serine of apo-ACP by AcpS. This modification is essential for activity because fatty acids are bound in thioester linkage to the sulfhydryl of the prosthetic group.</text>
</comment>
<comment type="similarity">
    <text evidence="1">Belongs to the acyl carrier protein (ACP) family.</text>
</comment>
<sequence length="77" mass="8549">MENFDKVKDIIVDRLGVDADKVTEDASFKDDLGADSLDIAELVMELEDEFGTEIPDEEAEKINTVGDAVKFINSLEK</sequence>
<protein>
    <recommendedName>
        <fullName evidence="1">Acyl carrier protein</fullName>
        <shortName evidence="1">ACP</shortName>
    </recommendedName>
</protein>
<reference key="1">
    <citation type="submission" date="2007-06" db="EMBL/GenBank/DDBJ databases">
        <title>Complete sequence of chromosome of Staphylococcus aureus subsp. aureus JH1.</title>
        <authorList>
            <consortium name="US DOE Joint Genome Institute"/>
            <person name="Copeland A."/>
            <person name="Lucas S."/>
            <person name="Lapidus A."/>
            <person name="Barry K."/>
            <person name="Detter J.C."/>
            <person name="Glavina del Rio T."/>
            <person name="Hammon N."/>
            <person name="Israni S."/>
            <person name="Dalin E."/>
            <person name="Tice H."/>
            <person name="Pitluck S."/>
            <person name="Chain P."/>
            <person name="Malfatti S."/>
            <person name="Shin M."/>
            <person name="Vergez L."/>
            <person name="Schmutz J."/>
            <person name="Larimer F."/>
            <person name="Land M."/>
            <person name="Hauser L."/>
            <person name="Kyrpides N."/>
            <person name="Ivanova N."/>
            <person name="Tomasz A."/>
            <person name="Richardson P."/>
        </authorList>
    </citation>
    <scope>NUCLEOTIDE SEQUENCE [LARGE SCALE GENOMIC DNA]</scope>
    <source>
        <strain>JH1</strain>
    </source>
</reference>
<keyword id="KW-0963">Cytoplasm</keyword>
<keyword id="KW-0275">Fatty acid biosynthesis</keyword>
<keyword id="KW-0276">Fatty acid metabolism</keyword>
<keyword id="KW-0444">Lipid biosynthesis</keyword>
<keyword id="KW-0443">Lipid metabolism</keyword>
<keyword id="KW-0596">Phosphopantetheine</keyword>
<keyword id="KW-0597">Phosphoprotein</keyword>
<gene>
    <name evidence="1" type="primary">acpP</name>
    <name type="ordered locus">SaurJH1_1316</name>
</gene>
<name>ACP_STAA2</name>
<organism>
    <name type="scientific">Staphylococcus aureus (strain JH1)</name>
    <dbReference type="NCBI Taxonomy" id="359787"/>
    <lineage>
        <taxon>Bacteria</taxon>
        <taxon>Bacillati</taxon>
        <taxon>Bacillota</taxon>
        <taxon>Bacilli</taxon>
        <taxon>Bacillales</taxon>
        <taxon>Staphylococcaceae</taxon>
        <taxon>Staphylococcus</taxon>
    </lineage>
</organism>